<keyword id="KW-0028">Amino-acid biosynthesis</keyword>
<keyword id="KW-0067">ATP-binding</keyword>
<keyword id="KW-0963">Cytoplasm</keyword>
<keyword id="KW-0328">Glycosyltransferase</keyword>
<keyword id="KW-0368">Histidine biosynthesis</keyword>
<keyword id="KW-0460">Magnesium</keyword>
<keyword id="KW-0479">Metal-binding</keyword>
<keyword id="KW-0547">Nucleotide-binding</keyword>
<keyword id="KW-0808">Transferase</keyword>
<name>HIS1_CAMJ8</name>
<organism>
    <name type="scientific">Campylobacter jejuni subsp. jejuni serotype O:6 (strain 81116 / NCTC 11828)</name>
    <dbReference type="NCBI Taxonomy" id="407148"/>
    <lineage>
        <taxon>Bacteria</taxon>
        <taxon>Pseudomonadati</taxon>
        <taxon>Campylobacterota</taxon>
        <taxon>Epsilonproteobacteria</taxon>
        <taxon>Campylobacterales</taxon>
        <taxon>Campylobacteraceae</taxon>
        <taxon>Campylobacter</taxon>
    </lineage>
</organism>
<feature type="chain" id="PRO_1000071206" description="ATP phosphoribosyltransferase">
    <location>
        <begin position="1"/>
        <end position="299"/>
    </location>
</feature>
<protein>
    <recommendedName>
        <fullName evidence="1">ATP phosphoribosyltransferase</fullName>
        <shortName evidence="1">ATP-PRT</shortName>
        <shortName evidence="1">ATP-PRTase</shortName>
        <ecNumber evidence="1">2.4.2.17</ecNumber>
    </recommendedName>
</protein>
<comment type="function">
    <text evidence="1">Catalyzes the condensation of ATP and 5-phosphoribose 1-diphosphate to form N'-(5'-phosphoribosyl)-ATP (PR-ATP). Has a crucial role in the pathway because the rate of histidine biosynthesis seems to be controlled primarily by regulation of HisG enzymatic activity.</text>
</comment>
<comment type="catalytic activity">
    <reaction evidence="1">
        <text>1-(5-phospho-beta-D-ribosyl)-ATP + diphosphate = 5-phospho-alpha-D-ribose 1-diphosphate + ATP</text>
        <dbReference type="Rhea" id="RHEA:18473"/>
        <dbReference type="ChEBI" id="CHEBI:30616"/>
        <dbReference type="ChEBI" id="CHEBI:33019"/>
        <dbReference type="ChEBI" id="CHEBI:58017"/>
        <dbReference type="ChEBI" id="CHEBI:73183"/>
        <dbReference type="EC" id="2.4.2.17"/>
    </reaction>
</comment>
<comment type="cofactor">
    <cofactor evidence="1">
        <name>Mg(2+)</name>
        <dbReference type="ChEBI" id="CHEBI:18420"/>
    </cofactor>
</comment>
<comment type="activity regulation">
    <text evidence="1">Feedback inhibited by histidine.</text>
</comment>
<comment type="pathway">
    <text evidence="1">Amino-acid biosynthesis; L-histidine biosynthesis; L-histidine from 5-phospho-alpha-D-ribose 1-diphosphate: step 1/9.</text>
</comment>
<comment type="subcellular location">
    <subcellularLocation>
        <location evidence="1">Cytoplasm</location>
    </subcellularLocation>
</comment>
<comment type="similarity">
    <text evidence="1">Belongs to the ATP phosphoribosyltransferase family. Long subfamily.</text>
</comment>
<accession>A8FNQ9</accession>
<reference key="1">
    <citation type="journal article" date="2007" name="J. Bacteriol.">
        <title>The complete genome sequence of Campylobacter jejuni strain 81116 (NCTC11828).</title>
        <authorList>
            <person name="Pearson B.M."/>
            <person name="Gaskin D.J.H."/>
            <person name="Segers R.P.A.M."/>
            <person name="Wells J.M."/>
            <person name="Nuijten P.J.M."/>
            <person name="van Vliet A.H.M."/>
        </authorList>
    </citation>
    <scope>NUCLEOTIDE SEQUENCE [LARGE SCALE GENOMIC DNA]</scope>
    <source>
        <strain>81116 / NCTC 11828</strain>
    </source>
</reference>
<gene>
    <name evidence="1" type="primary">hisG</name>
    <name type="ordered locus">C8J_1499</name>
</gene>
<proteinExistence type="inferred from homology"/>
<sequence length="299" mass="33669">MQENTRLRIAIQKSGRLSKESIELLSECGVKMHIHEQSLIAFSTNLPIDILRVRDDDIPGLIFDGVVDLGIIGENVLEENELERQSLGENPSYKLLKKLDFGYCRLSLALPQENKFQNLKDFEGLRIATSYPQLLKRFMKENGINYKNCMLTGSVEVAPRANLADAICDLVSSGATLQANNLKEVKVIYESRACLIQKENALSKEKQALVDKIMLRVAGVMQARESKYIMLHAPKEKLDKIQALLPGVERPTILPLAHDEKNVALHMVSKENLFWETMEALKEEGASSILVLPIEKMLK</sequence>
<evidence type="ECO:0000255" key="1">
    <source>
        <dbReference type="HAMAP-Rule" id="MF_00079"/>
    </source>
</evidence>
<dbReference type="EC" id="2.4.2.17" evidence="1"/>
<dbReference type="EMBL" id="CP000814">
    <property type="protein sequence ID" value="ABV53096.1"/>
    <property type="molecule type" value="Genomic_DNA"/>
</dbReference>
<dbReference type="RefSeq" id="WP_002866577.1">
    <property type="nucleotide sequence ID" value="NC_009839.1"/>
</dbReference>
<dbReference type="SMR" id="A8FNQ9"/>
<dbReference type="KEGG" id="cju:C8J_1499"/>
<dbReference type="HOGENOM" id="CLU_038115_1_0_7"/>
<dbReference type="UniPathway" id="UPA00031">
    <property type="reaction ID" value="UER00006"/>
</dbReference>
<dbReference type="GO" id="GO:0005737">
    <property type="term" value="C:cytoplasm"/>
    <property type="evidence" value="ECO:0007669"/>
    <property type="project" value="UniProtKB-SubCell"/>
</dbReference>
<dbReference type="GO" id="GO:0005524">
    <property type="term" value="F:ATP binding"/>
    <property type="evidence" value="ECO:0007669"/>
    <property type="project" value="UniProtKB-KW"/>
</dbReference>
<dbReference type="GO" id="GO:0003879">
    <property type="term" value="F:ATP phosphoribosyltransferase activity"/>
    <property type="evidence" value="ECO:0007669"/>
    <property type="project" value="UniProtKB-UniRule"/>
</dbReference>
<dbReference type="GO" id="GO:0000287">
    <property type="term" value="F:magnesium ion binding"/>
    <property type="evidence" value="ECO:0007669"/>
    <property type="project" value="UniProtKB-UniRule"/>
</dbReference>
<dbReference type="GO" id="GO:0000105">
    <property type="term" value="P:L-histidine biosynthetic process"/>
    <property type="evidence" value="ECO:0007669"/>
    <property type="project" value="UniProtKB-UniRule"/>
</dbReference>
<dbReference type="CDD" id="cd13592">
    <property type="entry name" value="PBP2_HisGL2"/>
    <property type="match status" value="1"/>
</dbReference>
<dbReference type="FunFam" id="3.30.70.120:FF:000002">
    <property type="entry name" value="ATP phosphoribosyltransferase"/>
    <property type="match status" value="1"/>
</dbReference>
<dbReference type="FunFam" id="3.40.190.10:FF:000008">
    <property type="entry name" value="ATP phosphoribosyltransferase"/>
    <property type="match status" value="1"/>
</dbReference>
<dbReference type="Gene3D" id="3.30.70.120">
    <property type="match status" value="1"/>
</dbReference>
<dbReference type="Gene3D" id="3.40.190.10">
    <property type="entry name" value="Periplasmic binding protein-like II"/>
    <property type="match status" value="2"/>
</dbReference>
<dbReference type="HAMAP" id="MF_00079">
    <property type="entry name" value="HisG_Long"/>
    <property type="match status" value="1"/>
</dbReference>
<dbReference type="InterPro" id="IPR020621">
    <property type="entry name" value="ATP-PRT_HisG_long"/>
</dbReference>
<dbReference type="InterPro" id="IPR013820">
    <property type="entry name" value="ATP_PRibTrfase_cat"/>
</dbReference>
<dbReference type="InterPro" id="IPR018198">
    <property type="entry name" value="ATP_PRibTrfase_CS"/>
</dbReference>
<dbReference type="InterPro" id="IPR001348">
    <property type="entry name" value="ATP_PRibTrfase_HisG"/>
</dbReference>
<dbReference type="InterPro" id="IPR013115">
    <property type="entry name" value="HisG_C"/>
</dbReference>
<dbReference type="InterPro" id="IPR011322">
    <property type="entry name" value="N-reg_PII-like_a/b"/>
</dbReference>
<dbReference type="InterPro" id="IPR015867">
    <property type="entry name" value="N-reg_PII/ATP_PRibTrfase_C"/>
</dbReference>
<dbReference type="NCBIfam" id="TIGR00070">
    <property type="entry name" value="hisG"/>
    <property type="match status" value="1"/>
</dbReference>
<dbReference type="NCBIfam" id="TIGR03455">
    <property type="entry name" value="HisG_C-term"/>
    <property type="match status" value="1"/>
</dbReference>
<dbReference type="PANTHER" id="PTHR21403:SF8">
    <property type="entry name" value="ATP PHOSPHORIBOSYLTRANSFERASE"/>
    <property type="match status" value="1"/>
</dbReference>
<dbReference type="PANTHER" id="PTHR21403">
    <property type="entry name" value="ATP PHOSPHORIBOSYLTRANSFERASE ATP-PRTASE"/>
    <property type="match status" value="1"/>
</dbReference>
<dbReference type="Pfam" id="PF01634">
    <property type="entry name" value="HisG"/>
    <property type="match status" value="1"/>
</dbReference>
<dbReference type="Pfam" id="PF08029">
    <property type="entry name" value="HisG_C"/>
    <property type="match status" value="1"/>
</dbReference>
<dbReference type="SUPFAM" id="SSF54913">
    <property type="entry name" value="GlnB-like"/>
    <property type="match status" value="1"/>
</dbReference>
<dbReference type="SUPFAM" id="SSF53850">
    <property type="entry name" value="Periplasmic binding protein-like II"/>
    <property type="match status" value="1"/>
</dbReference>
<dbReference type="PROSITE" id="PS01316">
    <property type="entry name" value="ATP_P_PHORIBOSYLTR"/>
    <property type="match status" value="1"/>
</dbReference>